<dbReference type="EMBL" id="CP000828">
    <property type="protein sequence ID" value="ABW25480.1"/>
    <property type="molecule type" value="Genomic_DNA"/>
</dbReference>
<dbReference type="RefSeq" id="WP_012161087.1">
    <property type="nucleotide sequence ID" value="NC_009925.1"/>
</dbReference>
<dbReference type="SMR" id="B0CAZ0"/>
<dbReference type="STRING" id="329726.AM1_0423"/>
<dbReference type="KEGG" id="amr:AM1_0423"/>
<dbReference type="eggNOG" id="COG0484">
    <property type="taxonomic scope" value="Bacteria"/>
</dbReference>
<dbReference type="HOGENOM" id="CLU_017633_0_1_3"/>
<dbReference type="OrthoDB" id="9779889at2"/>
<dbReference type="Proteomes" id="UP000000268">
    <property type="component" value="Chromosome"/>
</dbReference>
<dbReference type="GO" id="GO:0005737">
    <property type="term" value="C:cytoplasm"/>
    <property type="evidence" value="ECO:0007669"/>
    <property type="project" value="UniProtKB-SubCell"/>
</dbReference>
<dbReference type="GO" id="GO:0005524">
    <property type="term" value="F:ATP binding"/>
    <property type="evidence" value="ECO:0007669"/>
    <property type="project" value="InterPro"/>
</dbReference>
<dbReference type="GO" id="GO:0031072">
    <property type="term" value="F:heat shock protein binding"/>
    <property type="evidence" value="ECO:0007669"/>
    <property type="project" value="InterPro"/>
</dbReference>
<dbReference type="GO" id="GO:0051082">
    <property type="term" value="F:unfolded protein binding"/>
    <property type="evidence" value="ECO:0007669"/>
    <property type="project" value="UniProtKB-UniRule"/>
</dbReference>
<dbReference type="GO" id="GO:0008270">
    <property type="term" value="F:zinc ion binding"/>
    <property type="evidence" value="ECO:0007669"/>
    <property type="project" value="UniProtKB-UniRule"/>
</dbReference>
<dbReference type="GO" id="GO:0051085">
    <property type="term" value="P:chaperone cofactor-dependent protein refolding"/>
    <property type="evidence" value="ECO:0007669"/>
    <property type="project" value="TreeGrafter"/>
</dbReference>
<dbReference type="GO" id="GO:0006260">
    <property type="term" value="P:DNA replication"/>
    <property type="evidence" value="ECO:0007669"/>
    <property type="project" value="UniProtKB-KW"/>
</dbReference>
<dbReference type="GO" id="GO:0042026">
    <property type="term" value="P:protein refolding"/>
    <property type="evidence" value="ECO:0007669"/>
    <property type="project" value="TreeGrafter"/>
</dbReference>
<dbReference type="GO" id="GO:0009408">
    <property type="term" value="P:response to heat"/>
    <property type="evidence" value="ECO:0007669"/>
    <property type="project" value="InterPro"/>
</dbReference>
<dbReference type="CDD" id="cd06257">
    <property type="entry name" value="DnaJ"/>
    <property type="match status" value="1"/>
</dbReference>
<dbReference type="CDD" id="cd10747">
    <property type="entry name" value="DnaJ_C"/>
    <property type="match status" value="1"/>
</dbReference>
<dbReference type="CDD" id="cd10719">
    <property type="entry name" value="DnaJ_zf"/>
    <property type="match status" value="1"/>
</dbReference>
<dbReference type="FunFam" id="2.60.260.20:FF:000005">
    <property type="entry name" value="Chaperone protein dnaJ 1, mitochondrial"/>
    <property type="match status" value="1"/>
</dbReference>
<dbReference type="FunFam" id="2.10.230.10:FF:000002">
    <property type="entry name" value="Molecular chaperone DnaJ"/>
    <property type="match status" value="1"/>
</dbReference>
<dbReference type="Gene3D" id="1.10.287.110">
    <property type="entry name" value="DnaJ domain"/>
    <property type="match status" value="1"/>
</dbReference>
<dbReference type="Gene3D" id="2.10.230.10">
    <property type="entry name" value="Heat shock protein DnaJ, cysteine-rich domain"/>
    <property type="match status" value="1"/>
</dbReference>
<dbReference type="Gene3D" id="2.60.260.20">
    <property type="entry name" value="Urease metallochaperone UreE, N-terminal domain"/>
    <property type="match status" value="2"/>
</dbReference>
<dbReference type="HAMAP" id="MF_01152">
    <property type="entry name" value="DnaJ"/>
    <property type="match status" value="1"/>
</dbReference>
<dbReference type="InterPro" id="IPR012724">
    <property type="entry name" value="DnaJ"/>
</dbReference>
<dbReference type="InterPro" id="IPR002939">
    <property type="entry name" value="DnaJ_C"/>
</dbReference>
<dbReference type="InterPro" id="IPR001623">
    <property type="entry name" value="DnaJ_domain"/>
</dbReference>
<dbReference type="InterPro" id="IPR018253">
    <property type="entry name" value="DnaJ_domain_CS"/>
</dbReference>
<dbReference type="InterPro" id="IPR008971">
    <property type="entry name" value="HSP40/DnaJ_pept-bd"/>
</dbReference>
<dbReference type="InterPro" id="IPR001305">
    <property type="entry name" value="HSP_DnaJ_Cys-rich_dom"/>
</dbReference>
<dbReference type="InterPro" id="IPR036410">
    <property type="entry name" value="HSP_DnaJ_Cys-rich_dom_sf"/>
</dbReference>
<dbReference type="InterPro" id="IPR036869">
    <property type="entry name" value="J_dom_sf"/>
</dbReference>
<dbReference type="NCBIfam" id="TIGR02349">
    <property type="entry name" value="DnaJ_bact"/>
    <property type="match status" value="1"/>
</dbReference>
<dbReference type="NCBIfam" id="NF008035">
    <property type="entry name" value="PRK10767.1"/>
    <property type="match status" value="1"/>
</dbReference>
<dbReference type="NCBIfam" id="NF010886">
    <property type="entry name" value="PRK14293.1"/>
    <property type="match status" value="1"/>
</dbReference>
<dbReference type="PANTHER" id="PTHR43096:SF10">
    <property type="entry name" value="CHAPERONE PROTEIN DNAJ A6, CHLOROPLASTIC"/>
    <property type="match status" value="1"/>
</dbReference>
<dbReference type="PANTHER" id="PTHR43096">
    <property type="entry name" value="DNAJ HOMOLOG 1, MITOCHONDRIAL-RELATED"/>
    <property type="match status" value="1"/>
</dbReference>
<dbReference type="Pfam" id="PF00226">
    <property type="entry name" value="DnaJ"/>
    <property type="match status" value="1"/>
</dbReference>
<dbReference type="Pfam" id="PF01556">
    <property type="entry name" value="DnaJ_C"/>
    <property type="match status" value="1"/>
</dbReference>
<dbReference type="Pfam" id="PF00684">
    <property type="entry name" value="DnaJ_CXXCXGXG"/>
    <property type="match status" value="1"/>
</dbReference>
<dbReference type="PRINTS" id="PR00625">
    <property type="entry name" value="JDOMAIN"/>
</dbReference>
<dbReference type="SMART" id="SM00271">
    <property type="entry name" value="DnaJ"/>
    <property type="match status" value="1"/>
</dbReference>
<dbReference type="SUPFAM" id="SSF46565">
    <property type="entry name" value="Chaperone J-domain"/>
    <property type="match status" value="1"/>
</dbReference>
<dbReference type="SUPFAM" id="SSF57938">
    <property type="entry name" value="DnaJ/Hsp40 cysteine-rich domain"/>
    <property type="match status" value="1"/>
</dbReference>
<dbReference type="SUPFAM" id="SSF49493">
    <property type="entry name" value="HSP40/DnaJ peptide-binding domain"/>
    <property type="match status" value="2"/>
</dbReference>
<dbReference type="PROSITE" id="PS00636">
    <property type="entry name" value="DNAJ_1"/>
    <property type="match status" value="1"/>
</dbReference>
<dbReference type="PROSITE" id="PS50076">
    <property type="entry name" value="DNAJ_2"/>
    <property type="match status" value="1"/>
</dbReference>
<dbReference type="PROSITE" id="PS51188">
    <property type="entry name" value="ZF_CR"/>
    <property type="match status" value="1"/>
</dbReference>
<feature type="chain" id="PRO_1000085131" description="Chaperone protein DnaJ">
    <location>
        <begin position="1"/>
        <end position="374"/>
    </location>
</feature>
<feature type="domain" description="J" evidence="1">
    <location>
        <begin position="4"/>
        <end position="68"/>
    </location>
</feature>
<feature type="repeat" description="CXXCXGXG motif">
    <location>
        <begin position="146"/>
        <end position="153"/>
    </location>
</feature>
<feature type="repeat" description="CXXCXGXG motif">
    <location>
        <begin position="163"/>
        <end position="170"/>
    </location>
</feature>
<feature type="repeat" description="CXXCXGXG motif">
    <location>
        <begin position="189"/>
        <end position="196"/>
    </location>
</feature>
<feature type="repeat" description="CXXCXGXG motif">
    <location>
        <begin position="203"/>
        <end position="210"/>
    </location>
</feature>
<feature type="zinc finger region" description="CR-type" evidence="1">
    <location>
        <begin position="133"/>
        <end position="215"/>
    </location>
</feature>
<feature type="binding site" evidence="1">
    <location>
        <position position="146"/>
    </location>
    <ligand>
        <name>Zn(2+)</name>
        <dbReference type="ChEBI" id="CHEBI:29105"/>
        <label>1</label>
    </ligand>
</feature>
<feature type="binding site" evidence="1">
    <location>
        <position position="149"/>
    </location>
    <ligand>
        <name>Zn(2+)</name>
        <dbReference type="ChEBI" id="CHEBI:29105"/>
        <label>1</label>
    </ligand>
</feature>
<feature type="binding site" evidence="1">
    <location>
        <position position="163"/>
    </location>
    <ligand>
        <name>Zn(2+)</name>
        <dbReference type="ChEBI" id="CHEBI:29105"/>
        <label>2</label>
    </ligand>
</feature>
<feature type="binding site" evidence="1">
    <location>
        <position position="166"/>
    </location>
    <ligand>
        <name>Zn(2+)</name>
        <dbReference type="ChEBI" id="CHEBI:29105"/>
        <label>2</label>
    </ligand>
</feature>
<feature type="binding site" evidence="1">
    <location>
        <position position="189"/>
    </location>
    <ligand>
        <name>Zn(2+)</name>
        <dbReference type="ChEBI" id="CHEBI:29105"/>
        <label>2</label>
    </ligand>
</feature>
<feature type="binding site" evidence="1">
    <location>
        <position position="192"/>
    </location>
    <ligand>
        <name>Zn(2+)</name>
        <dbReference type="ChEBI" id="CHEBI:29105"/>
        <label>2</label>
    </ligand>
</feature>
<feature type="binding site" evidence="1">
    <location>
        <position position="203"/>
    </location>
    <ligand>
        <name>Zn(2+)</name>
        <dbReference type="ChEBI" id="CHEBI:29105"/>
        <label>1</label>
    </ligand>
</feature>
<feature type="binding site" evidence="1">
    <location>
        <position position="206"/>
    </location>
    <ligand>
        <name>Zn(2+)</name>
        <dbReference type="ChEBI" id="CHEBI:29105"/>
        <label>1</label>
    </ligand>
</feature>
<sequence length="374" mass="40631">MARDYYDILGVSRSADPDELKRSYRRLARKYHPDVNKEPGAEDKFKEINKAYETLSDPQMRGRYDQFGEAGVSSAAGAGYQDFGDFGGFADIFETFFSGFGGSPQSGRRRSGPARGEDLRFDLKLKFREAVFGGEQQIRISHLESCKTCEGTGAKPGTRPQTCSTCQGSGQVRRMTRTPLGNFTQVSVCPTCNGQGQVVTEKCDSCGGRGQNQVSKKLQIKIPAGVDTGTRLRVSNEGDAGQKGGPPGDLYVYLFVQEDSEFRRDGTNVLSEFKISYLQAILGAQLPVKTVDGEETITIPAGTQPGTVLTLENHGVPRLGNPVSRGDHLITVIIDIPNRISTEERELLVQLASIRAEQTGKGGIEGFLGGIFGR</sequence>
<accession>B0CAZ0</accession>
<organism>
    <name type="scientific">Acaryochloris marina (strain MBIC 11017)</name>
    <dbReference type="NCBI Taxonomy" id="329726"/>
    <lineage>
        <taxon>Bacteria</taxon>
        <taxon>Bacillati</taxon>
        <taxon>Cyanobacteriota</taxon>
        <taxon>Cyanophyceae</taxon>
        <taxon>Acaryochloridales</taxon>
        <taxon>Acaryochloridaceae</taxon>
        <taxon>Acaryochloris</taxon>
    </lineage>
</organism>
<gene>
    <name evidence="1" type="primary">dnaJ</name>
    <name type="ordered locus">AM1_0423</name>
</gene>
<proteinExistence type="inferred from homology"/>
<name>DNAJ_ACAM1</name>
<comment type="function">
    <text evidence="1">Participates actively in the response to hyperosmotic and heat shock by preventing the aggregation of stress-denatured proteins and by disaggregating proteins, also in an autonomous, DnaK-independent fashion. Unfolded proteins bind initially to DnaJ; upon interaction with the DnaJ-bound protein, DnaK hydrolyzes its bound ATP, resulting in the formation of a stable complex. GrpE releases ADP from DnaK; ATP binding to DnaK triggers the release of the substrate protein, thus completing the reaction cycle. Several rounds of ATP-dependent interactions between DnaJ, DnaK and GrpE are required for fully efficient folding. Also involved, together with DnaK and GrpE, in the DNA replication of plasmids through activation of initiation proteins.</text>
</comment>
<comment type="cofactor">
    <cofactor evidence="1">
        <name>Zn(2+)</name>
        <dbReference type="ChEBI" id="CHEBI:29105"/>
    </cofactor>
    <text evidence="1">Binds 2 Zn(2+) ions per monomer.</text>
</comment>
<comment type="subunit">
    <text evidence="1">Homodimer.</text>
</comment>
<comment type="subcellular location">
    <subcellularLocation>
        <location evidence="1">Cytoplasm</location>
    </subcellularLocation>
</comment>
<comment type="domain">
    <text evidence="1">The J domain is necessary and sufficient to stimulate DnaK ATPase activity. Zinc center 1 plays an important role in the autonomous, DnaK-independent chaperone activity of DnaJ. Zinc center 2 is essential for interaction with DnaK and for DnaJ activity.</text>
</comment>
<comment type="similarity">
    <text evidence="1">Belongs to the DnaJ family.</text>
</comment>
<protein>
    <recommendedName>
        <fullName evidence="1">Chaperone protein DnaJ</fullName>
    </recommendedName>
</protein>
<reference key="1">
    <citation type="journal article" date="2008" name="Proc. Natl. Acad. Sci. U.S.A.">
        <title>Niche adaptation and genome expansion in the chlorophyll d-producing cyanobacterium Acaryochloris marina.</title>
        <authorList>
            <person name="Swingley W.D."/>
            <person name="Chen M."/>
            <person name="Cheung P.C."/>
            <person name="Conrad A.L."/>
            <person name="Dejesa L.C."/>
            <person name="Hao J."/>
            <person name="Honchak B.M."/>
            <person name="Karbach L.E."/>
            <person name="Kurdoglu A."/>
            <person name="Lahiri S."/>
            <person name="Mastrian S.D."/>
            <person name="Miyashita H."/>
            <person name="Page L."/>
            <person name="Ramakrishna P."/>
            <person name="Satoh S."/>
            <person name="Sattley W.M."/>
            <person name="Shimada Y."/>
            <person name="Taylor H.L."/>
            <person name="Tomo T."/>
            <person name="Tsuchiya T."/>
            <person name="Wang Z.T."/>
            <person name="Raymond J."/>
            <person name="Mimuro M."/>
            <person name="Blankenship R.E."/>
            <person name="Touchman J.W."/>
        </authorList>
    </citation>
    <scope>NUCLEOTIDE SEQUENCE [LARGE SCALE GENOMIC DNA]</scope>
    <source>
        <strain>MBIC 11017</strain>
    </source>
</reference>
<evidence type="ECO:0000255" key="1">
    <source>
        <dbReference type="HAMAP-Rule" id="MF_01152"/>
    </source>
</evidence>
<keyword id="KW-0143">Chaperone</keyword>
<keyword id="KW-0963">Cytoplasm</keyword>
<keyword id="KW-0235">DNA replication</keyword>
<keyword id="KW-0479">Metal-binding</keyword>
<keyword id="KW-1185">Reference proteome</keyword>
<keyword id="KW-0677">Repeat</keyword>
<keyword id="KW-0346">Stress response</keyword>
<keyword id="KW-0862">Zinc</keyword>
<keyword id="KW-0863">Zinc-finger</keyword>